<proteinExistence type="inferred from homology"/>
<protein>
    <recommendedName>
        <fullName evidence="1">Small, acid-soluble spore protein I</fullName>
        <shortName evidence="1">SASP I</shortName>
    </recommendedName>
</protein>
<comment type="subcellular location">
    <subcellularLocation>
        <location evidence="1">Spore core</location>
    </subcellularLocation>
</comment>
<comment type="induction">
    <text evidence="1">Expressed only in the forespore compartment of sporulating cells.</text>
</comment>
<comment type="similarity">
    <text evidence="1">Belongs to the SspI family.</text>
</comment>
<sequence>MDLNLRNAVIANVTGNNQDQLEHTIVDAIQSGEEKMLPGLGVLFEVLWQHASDSEKNEMLKTLEGGLKPAQ</sequence>
<evidence type="ECO:0000255" key="1">
    <source>
        <dbReference type="HAMAP-Rule" id="MF_00669"/>
    </source>
</evidence>
<feature type="chain" id="PRO_1000044699" description="Small, acid-soluble spore protein I">
    <location>
        <begin position="1"/>
        <end position="71"/>
    </location>
</feature>
<accession>A7Z7F5</accession>
<keyword id="KW-0749">Sporulation</keyword>
<name>SSPI_BACVZ</name>
<dbReference type="EMBL" id="CP000560">
    <property type="protein sequence ID" value="ABS74931.1"/>
    <property type="molecule type" value="Genomic_DNA"/>
</dbReference>
<dbReference type="RefSeq" id="WP_003152527.1">
    <property type="nucleotide sequence ID" value="NC_009725.2"/>
</dbReference>
<dbReference type="GeneID" id="93081715"/>
<dbReference type="KEGG" id="bay:RBAM_025730"/>
<dbReference type="HOGENOM" id="CLU_188877_0_0_9"/>
<dbReference type="Proteomes" id="UP000001120">
    <property type="component" value="Chromosome"/>
</dbReference>
<dbReference type="GO" id="GO:0030436">
    <property type="term" value="P:asexual sporulation"/>
    <property type="evidence" value="ECO:0007669"/>
    <property type="project" value="UniProtKB-UniRule"/>
</dbReference>
<dbReference type="GO" id="GO:0030435">
    <property type="term" value="P:sporulation resulting in formation of a cellular spore"/>
    <property type="evidence" value="ECO:0007669"/>
    <property type="project" value="UniProtKB-KW"/>
</dbReference>
<dbReference type="HAMAP" id="MF_00669">
    <property type="entry name" value="SspI"/>
    <property type="match status" value="1"/>
</dbReference>
<dbReference type="InterPro" id="IPR017525">
    <property type="entry name" value="SspI"/>
</dbReference>
<dbReference type="NCBIfam" id="TIGR03092">
    <property type="entry name" value="SASP_sspI"/>
    <property type="match status" value="1"/>
</dbReference>
<dbReference type="Pfam" id="PF14098">
    <property type="entry name" value="SSPI"/>
    <property type="match status" value="1"/>
</dbReference>
<reference key="1">
    <citation type="journal article" date="2007" name="Nat. Biotechnol.">
        <title>Comparative analysis of the complete genome sequence of the plant growth-promoting bacterium Bacillus amyloliquefaciens FZB42.</title>
        <authorList>
            <person name="Chen X.H."/>
            <person name="Koumoutsi A."/>
            <person name="Scholz R."/>
            <person name="Eisenreich A."/>
            <person name="Schneider K."/>
            <person name="Heinemeyer I."/>
            <person name="Morgenstern B."/>
            <person name="Voss B."/>
            <person name="Hess W.R."/>
            <person name="Reva O."/>
            <person name="Junge H."/>
            <person name="Voigt B."/>
            <person name="Jungblut P.R."/>
            <person name="Vater J."/>
            <person name="Suessmuth R."/>
            <person name="Liesegang H."/>
            <person name="Strittmatter A."/>
            <person name="Gottschalk G."/>
            <person name="Borriss R."/>
        </authorList>
    </citation>
    <scope>NUCLEOTIDE SEQUENCE [LARGE SCALE GENOMIC DNA]</scope>
    <source>
        <strain>DSM 23117 / BGSC 10A6 / LMG 26770 / FZB42</strain>
    </source>
</reference>
<organism>
    <name type="scientific">Bacillus velezensis (strain DSM 23117 / BGSC 10A6 / LMG 26770 / FZB42)</name>
    <name type="common">Bacillus amyloliquefaciens subsp. plantarum</name>
    <dbReference type="NCBI Taxonomy" id="326423"/>
    <lineage>
        <taxon>Bacteria</taxon>
        <taxon>Bacillati</taxon>
        <taxon>Bacillota</taxon>
        <taxon>Bacilli</taxon>
        <taxon>Bacillales</taxon>
        <taxon>Bacillaceae</taxon>
        <taxon>Bacillus</taxon>
        <taxon>Bacillus amyloliquefaciens group</taxon>
    </lineage>
</organism>
<gene>
    <name evidence="1" type="primary">sspI</name>
    <name type="ordered locus">RBAM_025730</name>
</gene>